<accession>A3DNC2</accession>
<name>RS8_STAMF</name>
<keyword id="KW-1185">Reference proteome</keyword>
<keyword id="KW-0687">Ribonucleoprotein</keyword>
<keyword id="KW-0689">Ribosomal protein</keyword>
<keyword id="KW-0694">RNA-binding</keyword>
<keyword id="KW-0699">rRNA-binding</keyword>
<comment type="function">
    <text evidence="1">One of the primary rRNA binding proteins, it binds directly to 16S rRNA central domain where it helps coordinate assembly of the platform of the 30S subunit.</text>
</comment>
<comment type="subunit">
    <text evidence="1">Part of the 30S ribosomal subunit.</text>
</comment>
<comment type="similarity">
    <text evidence="1">Belongs to the universal ribosomal protein uS8 family.</text>
</comment>
<organism>
    <name type="scientific">Staphylothermus marinus (strain ATCC 43588 / DSM 3639 / JCM 9404 / F1)</name>
    <dbReference type="NCBI Taxonomy" id="399550"/>
    <lineage>
        <taxon>Archaea</taxon>
        <taxon>Thermoproteota</taxon>
        <taxon>Thermoprotei</taxon>
        <taxon>Desulfurococcales</taxon>
        <taxon>Desulfurococcaceae</taxon>
        <taxon>Staphylothermus</taxon>
    </lineage>
</organism>
<feature type="chain" id="PRO_0000305772" description="Small ribosomal subunit protein uS8">
    <location>
        <begin position="1"/>
        <end position="133"/>
    </location>
</feature>
<gene>
    <name evidence="1" type="primary">rps8</name>
    <name type="ordered locus">Smar_1034</name>
</gene>
<evidence type="ECO:0000255" key="1">
    <source>
        <dbReference type="HAMAP-Rule" id="MF_01302"/>
    </source>
</evidence>
<evidence type="ECO:0000305" key="2"/>
<protein>
    <recommendedName>
        <fullName evidence="1">Small ribosomal subunit protein uS8</fullName>
    </recommendedName>
    <alternativeName>
        <fullName evidence="2">30S ribosomal protein S8</fullName>
    </alternativeName>
</protein>
<proteinExistence type="inferred from homology"/>
<dbReference type="EMBL" id="CP000575">
    <property type="protein sequence ID" value="ABN70132.1"/>
    <property type="molecule type" value="Genomic_DNA"/>
</dbReference>
<dbReference type="RefSeq" id="WP_011839323.1">
    <property type="nucleotide sequence ID" value="NC_009033.1"/>
</dbReference>
<dbReference type="SMR" id="A3DNC2"/>
<dbReference type="STRING" id="399550.Smar_1034"/>
<dbReference type="GeneID" id="4906897"/>
<dbReference type="KEGG" id="smr:Smar_1034"/>
<dbReference type="eggNOG" id="arCOG04091">
    <property type="taxonomic scope" value="Archaea"/>
</dbReference>
<dbReference type="HOGENOM" id="CLU_098428_1_1_2"/>
<dbReference type="OrthoDB" id="5670at2157"/>
<dbReference type="Proteomes" id="UP000000254">
    <property type="component" value="Chromosome"/>
</dbReference>
<dbReference type="GO" id="GO:1990904">
    <property type="term" value="C:ribonucleoprotein complex"/>
    <property type="evidence" value="ECO:0007669"/>
    <property type="project" value="UniProtKB-KW"/>
</dbReference>
<dbReference type="GO" id="GO:0005840">
    <property type="term" value="C:ribosome"/>
    <property type="evidence" value="ECO:0007669"/>
    <property type="project" value="UniProtKB-KW"/>
</dbReference>
<dbReference type="GO" id="GO:0019843">
    <property type="term" value="F:rRNA binding"/>
    <property type="evidence" value="ECO:0007669"/>
    <property type="project" value="UniProtKB-UniRule"/>
</dbReference>
<dbReference type="GO" id="GO:0003735">
    <property type="term" value="F:structural constituent of ribosome"/>
    <property type="evidence" value="ECO:0007669"/>
    <property type="project" value="InterPro"/>
</dbReference>
<dbReference type="GO" id="GO:0006412">
    <property type="term" value="P:translation"/>
    <property type="evidence" value="ECO:0007669"/>
    <property type="project" value="UniProtKB-UniRule"/>
</dbReference>
<dbReference type="FunFam" id="3.30.1370.30:FF:000001">
    <property type="entry name" value="40S ribosomal protein S15a"/>
    <property type="match status" value="1"/>
</dbReference>
<dbReference type="Gene3D" id="3.30.1370.30">
    <property type="match status" value="1"/>
</dbReference>
<dbReference type="Gene3D" id="3.30.1490.10">
    <property type="match status" value="1"/>
</dbReference>
<dbReference type="HAMAP" id="MF_01302_A">
    <property type="entry name" value="Ribosomal_uS8_A"/>
    <property type="match status" value="1"/>
</dbReference>
<dbReference type="InterPro" id="IPR000630">
    <property type="entry name" value="Ribosomal_uS8"/>
</dbReference>
<dbReference type="InterPro" id="IPR047863">
    <property type="entry name" value="Ribosomal_uS8_CS"/>
</dbReference>
<dbReference type="InterPro" id="IPR035987">
    <property type="entry name" value="Ribosomal_uS8_sf"/>
</dbReference>
<dbReference type="NCBIfam" id="NF003115">
    <property type="entry name" value="PRK04034.1"/>
    <property type="match status" value="1"/>
</dbReference>
<dbReference type="PANTHER" id="PTHR11758">
    <property type="entry name" value="40S RIBOSOMAL PROTEIN S15A"/>
    <property type="match status" value="1"/>
</dbReference>
<dbReference type="Pfam" id="PF00410">
    <property type="entry name" value="Ribosomal_S8"/>
    <property type="match status" value="1"/>
</dbReference>
<dbReference type="SUPFAM" id="SSF56047">
    <property type="entry name" value="Ribosomal protein S8"/>
    <property type="match status" value="1"/>
</dbReference>
<dbReference type="PROSITE" id="PS00053">
    <property type="entry name" value="RIBOSOMAL_S8"/>
    <property type="match status" value="1"/>
</dbReference>
<reference key="1">
    <citation type="journal article" date="2009" name="BMC Genomics">
        <title>The complete genome sequence of Staphylothermus marinus reveals differences in sulfur metabolism among heterotrophic Crenarchaeota.</title>
        <authorList>
            <person name="Anderson I.J."/>
            <person name="Dharmarajan L."/>
            <person name="Rodriguez J."/>
            <person name="Hooper S."/>
            <person name="Porat I."/>
            <person name="Ulrich L.E."/>
            <person name="Elkins J.G."/>
            <person name="Mavromatis K."/>
            <person name="Sun H."/>
            <person name="Land M."/>
            <person name="Lapidus A."/>
            <person name="Lucas S."/>
            <person name="Barry K."/>
            <person name="Huber H."/>
            <person name="Zhulin I.B."/>
            <person name="Whitman W.B."/>
            <person name="Mukhopadhyay B."/>
            <person name="Woese C."/>
            <person name="Bristow J."/>
            <person name="Kyrpides N."/>
        </authorList>
    </citation>
    <scope>NUCLEOTIDE SEQUENCE [LARGE SCALE GENOMIC DNA]</scope>
    <source>
        <strain>ATCC 43588 / DSM 3639 / JCM 9404 / F1</strain>
    </source>
</reference>
<reference key="2">
    <citation type="journal article" date="2009" name="Stand. Genomic Sci.">
        <title>Complete genome sequence of Staphylothermus marinus Stetter and Fiala 1986 type strain F1.</title>
        <authorList>
            <person name="Anderson I.J."/>
            <person name="Sun H."/>
            <person name="Lapidus A."/>
            <person name="Copeland A."/>
            <person name="Glavina Del Rio T."/>
            <person name="Tice H."/>
            <person name="Dalin E."/>
            <person name="Lucas S."/>
            <person name="Barry K."/>
            <person name="Land M."/>
            <person name="Richardson P."/>
            <person name="Huber H."/>
            <person name="Kyrpides N.C."/>
        </authorList>
    </citation>
    <scope>NUCLEOTIDE SEQUENCE [LARGE SCALE GENOMIC DNA]</scope>
    <source>
        <strain>ATCC 43588 / DSM 3639 / JCM 9404 / F1</strain>
    </source>
</reference>
<sequence length="133" mass="15128">MVMLDTLANALATIQNAEMRAKSEALIWPASKLIINVLRVMQREGYIGEFEYIDDGRWGKIKVQLLGRINKTGVIKPRFPVKLRDLERMPHWLRKYLPAYNIGILILSTPHGVLSHKEAIAKKTGGVLLAYVY</sequence>